<evidence type="ECO:0000269" key="1">
    <source>
    </source>
</evidence>
<evidence type="ECO:0000269" key="2">
    <source>
    </source>
</evidence>
<evidence type="ECO:0000303" key="3">
    <source>
    </source>
</evidence>
<evidence type="ECO:0000303" key="4">
    <source>
    </source>
</evidence>
<evidence type="ECO:0000305" key="5"/>
<evidence type="ECO:0000305" key="6">
    <source>
    </source>
</evidence>
<sequence length="334" mass="35918">MRTFVTGGSGYLGRNLLSALVARGISVRALVRSEEAAQKVQALGAQPILGTLEHRETLKEGMAGCDVLFHAAALTSARATDAEFHRANVLGTETVLAAARDARIQRMVHVSTEAVLADGRPLLQVDESHPLPKRPFAGYPATKAQAEQLVLQANGPGFTTVVVRPRFIWGADDTAFLPQLIDAIRTKRFRWVDGGRYLTSTCHVANVCEGMLLAAERGPGGEVYFLTDGAPVELRSFLTLLLETQGIKAEVGNIPFQAARAAAHLGESLWRALVPQARAPALRLAVYLLGREVTLNDDKARRELGYAGRVTHQQGLDALRQAGPAGQGAMPHRA</sequence>
<organism>
    <name type="scientific">Stigmatella aurantiaca</name>
    <dbReference type="NCBI Taxonomy" id="41"/>
    <lineage>
        <taxon>Bacteria</taxon>
        <taxon>Pseudomonadati</taxon>
        <taxon>Myxococcota</taxon>
        <taxon>Myxococcia</taxon>
        <taxon>Myxococcales</taxon>
        <taxon>Cystobacterineae</taxon>
        <taxon>Archangiaceae</taxon>
        <taxon>Stigmatella</taxon>
    </lineage>
</organism>
<gene>
    <name evidence="3 4" type="primary">auaH</name>
</gene>
<keyword id="KW-0520">NAD</keyword>
<keyword id="KW-0560">Oxidoreductase</keyword>
<feature type="chain" id="PRO_0000441677" description="4-hydroxy-2-methyl-3-oxo-4-farnesyl-3,4-dihydroquinoline-1-oxide ketoreductase">
    <location>
        <begin position="1"/>
        <end position="334"/>
    </location>
</feature>
<feature type="active site" description="Proton donor" evidence="6">
    <location>
        <position position="139"/>
    </location>
</feature>
<feature type="mutagenesis site" description="Does not produce aurachin B." evidence="2">
    <original>S</original>
    <variation>A</variation>
    <location>
        <position position="111"/>
    </location>
</feature>
<feature type="mutagenesis site" description="Does not produce aurachin B." evidence="2">
    <original>Y</original>
    <variation>F</variation>
    <location>
        <position position="139"/>
    </location>
</feature>
<comment type="function">
    <text evidence="2">Ketoreductase that catalyzes the final step in the conversion of aurachin C to aurachin B. Catalyzes the reduction of 4-hydroxy-2-methyl-3-oxo-4-[(2E,6E)-farnesyl]-3,4-dihydroquinoline-1-oxide to form 3,4-dihydroxy-2-methyl-4-[(2E,6E)-farnesyl]-3,4-dihydroquinoline 1-oxide, which then undergoes a spontaneous dehydration to form aurachin B. Accepts both NADH and NADPH, but has a preference for NADH.</text>
</comment>
<comment type="catalytic activity">
    <reaction evidence="2">
        <text>aurachin B + NAD(+) + H2O = 4-hydroxy-2-methyl-3-oxo-4-[(2E,6E)-farnesyl]-3,4-dihydroquinoline 1-oxide + NADH</text>
        <dbReference type="Rhea" id="RHEA:48720"/>
        <dbReference type="ChEBI" id="CHEBI:15377"/>
        <dbReference type="ChEBI" id="CHEBI:57540"/>
        <dbReference type="ChEBI" id="CHEBI:57945"/>
        <dbReference type="ChEBI" id="CHEBI:90784"/>
        <dbReference type="ChEBI" id="CHEBI:90785"/>
        <dbReference type="EC" id="1.1.1.394"/>
    </reaction>
    <physiologicalReaction direction="right-to-left" evidence="2">
        <dbReference type="Rhea" id="RHEA:48722"/>
    </physiologicalReaction>
</comment>
<comment type="catalytic activity">
    <reaction evidence="2">
        <text>3,4-dihydroxy-2-methyl-4-[(2E,6E)-farnesyl]-3,4-dihydroquinoline 1-oxide + NAD(+) = 4-hydroxy-2-methyl-3-oxo-4-[(2E,6E)-farnesyl]-3,4-dihydroquinoline 1-oxide + NADH + H(+)</text>
        <dbReference type="Rhea" id="RHEA:48728"/>
        <dbReference type="ChEBI" id="CHEBI:15378"/>
        <dbReference type="ChEBI" id="CHEBI:57540"/>
        <dbReference type="ChEBI" id="CHEBI:57945"/>
        <dbReference type="ChEBI" id="CHEBI:90785"/>
        <dbReference type="ChEBI" id="CHEBI:90786"/>
    </reaction>
    <physiologicalReaction direction="right-to-left" evidence="2">
        <dbReference type="Rhea" id="RHEA:48730"/>
    </physiologicalReaction>
</comment>
<comment type="disruption phenotype">
    <text evidence="1">Mutant accumulates aurachin D and aurachin C and does not produce aurachin B and aurachin A.</text>
</comment>
<comment type="similarity">
    <text evidence="5">Belongs to the 3-beta-HSD family.</text>
</comment>
<accession>H1ZZB0</accession>
<proteinExistence type="evidence at protein level"/>
<dbReference type="EC" id="1.1.1.394" evidence="2"/>
<dbReference type="EMBL" id="HE580421">
    <property type="protein sequence ID" value="CCD27750.1"/>
    <property type="molecule type" value="Genomic_DNA"/>
</dbReference>
<dbReference type="SMR" id="H1ZZB0"/>
<dbReference type="KEGG" id="ag:CCD27750"/>
<dbReference type="BioCyc" id="MetaCyc:MONOMER-18338"/>
<dbReference type="BRENDA" id="1.1.1.394">
    <property type="organism ID" value="5908"/>
</dbReference>
<dbReference type="GO" id="GO:0005737">
    <property type="term" value="C:cytoplasm"/>
    <property type="evidence" value="ECO:0007669"/>
    <property type="project" value="TreeGrafter"/>
</dbReference>
<dbReference type="GO" id="GO:0004029">
    <property type="term" value="F:aldehyde dehydrogenase (NAD+) activity"/>
    <property type="evidence" value="ECO:0007669"/>
    <property type="project" value="TreeGrafter"/>
</dbReference>
<dbReference type="GO" id="GO:0016616">
    <property type="term" value="F:oxidoreductase activity, acting on the CH-OH group of donors, NAD or NADP as acceptor"/>
    <property type="evidence" value="ECO:0007669"/>
    <property type="project" value="InterPro"/>
</dbReference>
<dbReference type="GO" id="GO:0006694">
    <property type="term" value="P:steroid biosynthetic process"/>
    <property type="evidence" value="ECO:0007669"/>
    <property type="project" value="InterPro"/>
</dbReference>
<dbReference type="Gene3D" id="3.40.50.720">
    <property type="entry name" value="NAD(P)-binding Rossmann-like Domain"/>
    <property type="match status" value="1"/>
</dbReference>
<dbReference type="InterPro" id="IPR002225">
    <property type="entry name" value="3Beta_OHSteriod_DH/Estase"/>
</dbReference>
<dbReference type="InterPro" id="IPR036291">
    <property type="entry name" value="NAD(P)-bd_dom_sf"/>
</dbReference>
<dbReference type="InterPro" id="IPR051783">
    <property type="entry name" value="NAD(P)-dependent_oxidoreduct"/>
</dbReference>
<dbReference type="PANTHER" id="PTHR48079:SF6">
    <property type="entry name" value="NAD(P)-BINDING DOMAIN-CONTAINING PROTEIN-RELATED"/>
    <property type="match status" value="1"/>
</dbReference>
<dbReference type="PANTHER" id="PTHR48079">
    <property type="entry name" value="PROTEIN YEEZ"/>
    <property type="match status" value="1"/>
</dbReference>
<dbReference type="Pfam" id="PF01073">
    <property type="entry name" value="3Beta_HSD"/>
    <property type="match status" value="1"/>
</dbReference>
<dbReference type="SUPFAM" id="SSF51735">
    <property type="entry name" value="NAD(P)-binding Rossmann-fold domains"/>
    <property type="match status" value="1"/>
</dbReference>
<protein>
    <recommendedName>
        <fullName evidence="6">4-hydroxy-2-methyl-3-oxo-4-farnesyl-3,4-dihydroquinoline-1-oxide ketoreductase</fullName>
        <ecNumber evidence="2">1.1.1.394</ecNumber>
    </recommendedName>
    <alternativeName>
        <fullName evidence="5">Aurachin B dehydrogenase</fullName>
    </alternativeName>
</protein>
<name>AUAH_STIAU</name>
<reference key="1">
    <citation type="journal article" date="2011" name="Mol. Biosyst.">
        <title>Completing the puzzle of aurachin biosynthesis in Stigmatella aurantiaca Sg a15.</title>
        <authorList>
            <person name="Pistorius D."/>
            <person name="Li Y."/>
            <person name="Sandmann A."/>
            <person name="Mueller R."/>
        </authorList>
    </citation>
    <scope>NUCLEOTIDE SEQUENCE [GENOMIC DNA]</scope>
    <scope>DISRUPTION PHENOTYPE</scope>
    <source>
        <strain>Sg a15</strain>
    </source>
</reference>
<reference key="2">
    <citation type="journal article" date="2012" name="Angew. Chem. Int. Ed.">
        <title>A semipinacol rearrangement directed by an enzymatic system featuring dual-function FAD-dependent monooxygenase.</title>
        <authorList>
            <person name="Katsuyama Y."/>
            <person name="Harmrolfs K."/>
            <person name="Pistorius D."/>
            <person name="Li Y."/>
            <person name="Mueller R."/>
        </authorList>
    </citation>
    <scope>FUNCTION</scope>
    <scope>CATALYTIC ACTIVITY</scope>
    <scope>MUTAGENESIS OF SER-111 AND TYR-139</scope>
    <source>
        <strain>Sg a15</strain>
    </source>
</reference>